<feature type="chain" id="PRO_1000091053" description="Aspartate--tRNA(Asp/Asn) ligase">
    <location>
        <begin position="1"/>
        <end position="602"/>
    </location>
</feature>
<feature type="region of interest" description="Aspartate" evidence="1">
    <location>
        <begin position="207"/>
        <end position="210"/>
    </location>
</feature>
<feature type="binding site" evidence="1">
    <location>
        <position position="183"/>
    </location>
    <ligand>
        <name>L-aspartate</name>
        <dbReference type="ChEBI" id="CHEBI:29991"/>
    </ligand>
</feature>
<feature type="binding site" evidence="1">
    <location>
        <begin position="229"/>
        <end position="231"/>
    </location>
    <ligand>
        <name>ATP</name>
        <dbReference type="ChEBI" id="CHEBI:30616"/>
    </ligand>
</feature>
<feature type="binding site" evidence="1">
    <location>
        <position position="229"/>
    </location>
    <ligand>
        <name>L-aspartate</name>
        <dbReference type="ChEBI" id="CHEBI:29991"/>
    </ligand>
</feature>
<feature type="binding site" evidence="1">
    <location>
        <position position="238"/>
    </location>
    <ligand>
        <name>ATP</name>
        <dbReference type="ChEBI" id="CHEBI:30616"/>
    </ligand>
</feature>
<feature type="binding site" evidence="1">
    <location>
        <position position="456"/>
    </location>
    <ligand>
        <name>L-aspartate</name>
        <dbReference type="ChEBI" id="CHEBI:29991"/>
    </ligand>
</feature>
<feature type="binding site" evidence="1">
    <location>
        <position position="496"/>
    </location>
    <ligand>
        <name>ATP</name>
        <dbReference type="ChEBI" id="CHEBI:30616"/>
    </ligand>
</feature>
<feature type="binding site" evidence="1">
    <location>
        <position position="503"/>
    </location>
    <ligand>
        <name>L-aspartate</name>
        <dbReference type="ChEBI" id="CHEBI:29991"/>
    </ligand>
</feature>
<feature type="binding site" evidence="1">
    <location>
        <begin position="548"/>
        <end position="551"/>
    </location>
    <ligand>
        <name>ATP</name>
        <dbReference type="ChEBI" id="CHEBI:30616"/>
    </ligand>
</feature>
<feature type="site" description="Important for tRNA non-discrimination" evidence="1">
    <location>
        <position position="38"/>
    </location>
</feature>
<feature type="site" description="Important for tRNA non-discrimination" evidence="1">
    <location>
        <position position="91"/>
    </location>
</feature>
<protein>
    <recommendedName>
        <fullName evidence="1">Aspartate--tRNA(Asp/Asn) ligase</fullName>
        <ecNumber evidence="1">6.1.1.23</ecNumber>
    </recommendedName>
    <alternativeName>
        <fullName evidence="1">Aspartyl-tRNA synthetase</fullName>
        <shortName evidence="1">AspRS</shortName>
    </alternativeName>
    <alternativeName>
        <fullName evidence="1">Non-discriminating aspartyl-tRNA synthetase</fullName>
        <shortName evidence="1">ND-AspRS</shortName>
    </alternativeName>
</protein>
<accession>B2V713</accession>
<evidence type="ECO:0000255" key="1">
    <source>
        <dbReference type="HAMAP-Rule" id="MF_00044"/>
    </source>
</evidence>
<comment type="function">
    <text evidence="1">Aspartyl-tRNA synthetase with relaxed tRNA specificity since it is able to aspartylate not only its cognate tRNA(Asp) but also tRNA(Asn). Reaction proceeds in two steps: L-aspartate is first activated by ATP to form Asp-AMP and then transferred to the acceptor end of tRNA(Asp/Asn).</text>
</comment>
<comment type="catalytic activity">
    <reaction evidence="1">
        <text>tRNA(Asx) + L-aspartate + ATP = L-aspartyl-tRNA(Asx) + AMP + diphosphate</text>
        <dbReference type="Rhea" id="RHEA:18349"/>
        <dbReference type="Rhea" id="RHEA-COMP:9710"/>
        <dbReference type="Rhea" id="RHEA-COMP:9711"/>
        <dbReference type="ChEBI" id="CHEBI:29991"/>
        <dbReference type="ChEBI" id="CHEBI:30616"/>
        <dbReference type="ChEBI" id="CHEBI:33019"/>
        <dbReference type="ChEBI" id="CHEBI:78442"/>
        <dbReference type="ChEBI" id="CHEBI:78516"/>
        <dbReference type="ChEBI" id="CHEBI:456215"/>
        <dbReference type="EC" id="6.1.1.23"/>
    </reaction>
</comment>
<comment type="subunit">
    <text evidence="1">Homodimer.</text>
</comment>
<comment type="subcellular location">
    <subcellularLocation>
        <location evidence="1">Cytoplasm</location>
    </subcellularLocation>
</comment>
<comment type="similarity">
    <text evidence="1">Belongs to the class-II aminoacyl-tRNA synthetase family. Type 1 subfamily.</text>
</comment>
<reference key="1">
    <citation type="journal article" date="2009" name="J. Bacteriol.">
        <title>Complete and draft genome sequences of six members of the Aquificales.</title>
        <authorList>
            <person name="Reysenbach A.-L."/>
            <person name="Hamamura N."/>
            <person name="Podar M."/>
            <person name="Griffiths E."/>
            <person name="Ferreira S."/>
            <person name="Hochstein R."/>
            <person name="Heidelberg J."/>
            <person name="Johnson J."/>
            <person name="Mead D."/>
            <person name="Pohorille A."/>
            <person name="Sarmiento M."/>
            <person name="Schweighofer K."/>
            <person name="Seshadri R."/>
            <person name="Voytek M.A."/>
        </authorList>
    </citation>
    <scope>NUCLEOTIDE SEQUENCE [LARGE SCALE GENOMIC DNA]</scope>
    <source>
        <strain>YO3AOP1</strain>
    </source>
</reference>
<proteinExistence type="inferred from homology"/>
<dbReference type="EC" id="6.1.1.23" evidence="1"/>
<dbReference type="EMBL" id="CP001080">
    <property type="protein sequence ID" value="ACD65795.1"/>
    <property type="molecule type" value="Genomic_DNA"/>
</dbReference>
<dbReference type="RefSeq" id="WP_012458885.1">
    <property type="nucleotide sequence ID" value="NC_010730.1"/>
</dbReference>
<dbReference type="SMR" id="B2V713"/>
<dbReference type="STRING" id="436114.SYO3AOP1_0150"/>
<dbReference type="KEGG" id="sul:SYO3AOP1_0150"/>
<dbReference type="eggNOG" id="COG0173">
    <property type="taxonomic scope" value="Bacteria"/>
</dbReference>
<dbReference type="HOGENOM" id="CLU_014330_3_2_0"/>
<dbReference type="GO" id="GO:0005737">
    <property type="term" value="C:cytoplasm"/>
    <property type="evidence" value="ECO:0007669"/>
    <property type="project" value="UniProtKB-SubCell"/>
</dbReference>
<dbReference type="GO" id="GO:0004815">
    <property type="term" value="F:aspartate-tRNA ligase activity"/>
    <property type="evidence" value="ECO:0007669"/>
    <property type="project" value="UniProtKB-UniRule"/>
</dbReference>
<dbReference type="GO" id="GO:0050560">
    <property type="term" value="F:aspartate-tRNA(Asn) ligase activity"/>
    <property type="evidence" value="ECO:0007669"/>
    <property type="project" value="UniProtKB-EC"/>
</dbReference>
<dbReference type="GO" id="GO:0005524">
    <property type="term" value="F:ATP binding"/>
    <property type="evidence" value="ECO:0007669"/>
    <property type="project" value="UniProtKB-UniRule"/>
</dbReference>
<dbReference type="GO" id="GO:0003676">
    <property type="term" value="F:nucleic acid binding"/>
    <property type="evidence" value="ECO:0007669"/>
    <property type="project" value="InterPro"/>
</dbReference>
<dbReference type="GO" id="GO:0006422">
    <property type="term" value="P:aspartyl-tRNA aminoacylation"/>
    <property type="evidence" value="ECO:0007669"/>
    <property type="project" value="UniProtKB-UniRule"/>
</dbReference>
<dbReference type="CDD" id="cd00777">
    <property type="entry name" value="AspRS_core"/>
    <property type="match status" value="1"/>
</dbReference>
<dbReference type="CDD" id="cd04317">
    <property type="entry name" value="EcAspRS_like_N"/>
    <property type="match status" value="1"/>
</dbReference>
<dbReference type="Gene3D" id="3.30.930.10">
    <property type="entry name" value="Bira Bifunctional Protein, Domain 2"/>
    <property type="match status" value="1"/>
</dbReference>
<dbReference type="Gene3D" id="3.30.1360.30">
    <property type="entry name" value="GAD-like domain"/>
    <property type="match status" value="1"/>
</dbReference>
<dbReference type="Gene3D" id="2.40.50.140">
    <property type="entry name" value="Nucleic acid-binding proteins"/>
    <property type="match status" value="1"/>
</dbReference>
<dbReference type="HAMAP" id="MF_00044">
    <property type="entry name" value="Asp_tRNA_synth_type1"/>
    <property type="match status" value="1"/>
</dbReference>
<dbReference type="InterPro" id="IPR004364">
    <property type="entry name" value="Aa-tRNA-synt_II"/>
</dbReference>
<dbReference type="InterPro" id="IPR006195">
    <property type="entry name" value="aa-tRNA-synth_II"/>
</dbReference>
<dbReference type="InterPro" id="IPR045864">
    <property type="entry name" value="aa-tRNA-synth_II/BPL/LPL"/>
</dbReference>
<dbReference type="InterPro" id="IPR004524">
    <property type="entry name" value="Asp-tRNA-ligase_1"/>
</dbReference>
<dbReference type="InterPro" id="IPR047089">
    <property type="entry name" value="Asp-tRNA-ligase_1_N"/>
</dbReference>
<dbReference type="InterPro" id="IPR002312">
    <property type="entry name" value="Asp/Asn-tRNA-synth_IIb"/>
</dbReference>
<dbReference type="InterPro" id="IPR047090">
    <property type="entry name" value="AspRS_core"/>
</dbReference>
<dbReference type="InterPro" id="IPR004115">
    <property type="entry name" value="GAD-like_sf"/>
</dbReference>
<dbReference type="InterPro" id="IPR029351">
    <property type="entry name" value="GAD_dom"/>
</dbReference>
<dbReference type="InterPro" id="IPR012340">
    <property type="entry name" value="NA-bd_OB-fold"/>
</dbReference>
<dbReference type="InterPro" id="IPR004365">
    <property type="entry name" value="NA-bd_OB_tRNA"/>
</dbReference>
<dbReference type="NCBIfam" id="TIGR00459">
    <property type="entry name" value="aspS_bact"/>
    <property type="match status" value="1"/>
</dbReference>
<dbReference type="NCBIfam" id="NF001750">
    <property type="entry name" value="PRK00476.1"/>
    <property type="match status" value="1"/>
</dbReference>
<dbReference type="PANTHER" id="PTHR22594:SF5">
    <property type="entry name" value="ASPARTATE--TRNA LIGASE, MITOCHONDRIAL"/>
    <property type="match status" value="1"/>
</dbReference>
<dbReference type="PANTHER" id="PTHR22594">
    <property type="entry name" value="ASPARTYL/LYSYL-TRNA SYNTHETASE"/>
    <property type="match status" value="1"/>
</dbReference>
<dbReference type="Pfam" id="PF02938">
    <property type="entry name" value="GAD"/>
    <property type="match status" value="1"/>
</dbReference>
<dbReference type="Pfam" id="PF00152">
    <property type="entry name" value="tRNA-synt_2"/>
    <property type="match status" value="1"/>
</dbReference>
<dbReference type="Pfam" id="PF01336">
    <property type="entry name" value="tRNA_anti-codon"/>
    <property type="match status" value="1"/>
</dbReference>
<dbReference type="PRINTS" id="PR01042">
    <property type="entry name" value="TRNASYNTHASP"/>
</dbReference>
<dbReference type="SUPFAM" id="SSF55681">
    <property type="entry name" value="Class II aaRS and biotin synthetases"/>
    <property type="match status" value="1"/>
</dbReference>
<dbReference type="SUPFAM" id="SSF55261">
    <property type="entry name" value="GAD domain-like"/>
    <property type="match status" value="1"/>
</dbReference>
<dbReference type="SUPFAM" id="SSF50249">
    <property type="entry name" value="Nucleic acid-binding proteins"/>
    <property type="match status" value="1"/>
</dbReference>
<dbReference type="PROSITE" id="PS50862">
    <property type="entry name" value="AA_TRNA_LIGASE_II"/>
    <property type="match status" value="1"/>
</dbReference>
<organism>
    <name type="scientific">Sulfurihydrogenibium sp. (strain YO3AOP1)</name>
    <dbReference type="NCBI Taxonomy" id="436114"/>
    <lineage>
        <taxon>Bacteria</taxon>
        <taxon>Pseudomonadati</taxon>
        <taxon>Aquificota</taxon>
        <taxon>Aquificia</taxon>
        <taxon>Aquificales</taxon>
        <taxon>Hydrogenothermaceae</taxon>
        <taxon>Sulfurihydrogenibium</taxon>
    </lineage>
</organism>
<keyword id="KW-0030">Aminoacyl-tRNA synthetase</keyword>
<keyword id="KW-0067">ATP-binding</keyword>
<keyword id="KW-0963">Cytoplasm</keyword>
<keyword id="KW-0436">Ligase</keyword>
<keyword id="KW-0547">Nucleotide-binding</keyword>
<keyword id="KW-0648">Protein biosynthesis</keyword>
<gene>
    <name evidence="1" type="primary">aspS</name>
    <name type="ordered locus">SYO3AOP1_0150</name>
</gene>
<name>SYDND_SULSY</name>
<sequence length="602" mass="68774">MIDQLREFKRDYYCGDLNESNIGDEVRLLGWVDTVRDHGGVIFINLRDREGIVQVVFDPSKIGEELYNKAKKLKSEYVIGVRGRVYRRPAGTENPKMKTGNIEVAGEELLILNTSKALPFPIEDNIKVSEEVRLKYRYLDLRRPSMQRNIILRHEVYQAVREFLAGNGFIEVETPMLTKSTPEGARDFLVPSRLEKGKFYALPQSPQLFKQILMVAGLERYFQIAKCFRDEDLRADRQPEFTQIDLEMSFVTEDDVMTLAESLIQYVYKKVLGIDIKIPFRRMSYEEAINKYGTDKPDLRYGLELIDITDLAKEVEFKVFNDVAKSGGLVKGINIKGGSKFSRKEIDELTEYAKKFGAKGMAWVKLENGEATSPILKFFTEEQKQKLFSLMDAKDGDLLIFIADKKDITHKVLGFLRKHIAEKMNLIDNSKLEFLWVVDFPLFEWDEEENRLVAIHHPFTSPKDEDIDRLDEALNSPEIALSFKSKAYDMVLNGEEIGGGSIRIHTPYIQEKVFQLLNISEEEAKEKFGFLIEALSYGAPPHGGLAFGLDRILALMTGSESIRDVIAFPKTQKGICPLTGAPDYVSEKQLKEVGIKVEVDEE</sequence>